<feature type="chain" id="PRO_0000099928" description="Indolepyruvate oxidoreductase subunit IorA">
    <location>
        <begin position="1"/>
        <end position="648"/>
    </location>
</feature>
<feature type="domain" description="4Fe-4S ferredoxin-type 1" evidence="3">
    <location>
        <begin position="585"/>
        <end position="614"/>
    </location>
</feature>
<feature type="domain" description="4Fe-4S ferredoxin-type 2" evidence="3">
    <location>
        <begin position="616"/>
        <end position="645"/>
    </location>
</feature>
<feature type="binding site" evidence="2">
    <location>
        <position position="594"/>
    </location>
    <ligand>
        <name>[4Fe-4S] cluster</name>
        <dbReference type="ChEBI" id="CHEBI:49883"/>
        <label>1</label>
    </ligand>
</feature>
<feature type="binding site" evidence="2">
    <location>
        <position position="597"/>
    </location>
    <ligand>
        <name>[4Fe-4S] cluster</name>
        <dbReference type="ChEBI" id="CHEBI:49883"/>
        <label>1</label>
    </ligand>
</feature>
<feature type="binding site" evidence="2">
    <location>
        <position position="600"/>
    </location>
    <ligand>
        <name>[4Fe-4S] cluster</name>
        <dbReference type="ChEBI" id="CHEBI:49883"/>
        <label>1</label>
    </ligand>
</feature>
<feature type="binding site" evidence="2">
    <location>
        <position position="606"/>
    </location>
    <ligand>
        <name>[4Fe-4S] cluster</name>
        <dbReference type="ChEBI" id="CHEBI:49883"/>
        <label>2</label>
    </ligand>
</feature>
<feature type="binding site" evidence="2">
    <location>
        <position position="625"/>
    </location>
    <ligand>
        <name>[4Fe-4S] cluster</name>
        <dbReference type="ChEBI" id="CHEBI:49883"/>
        <label>2</label>
    </ligand>
</feature>
<feature type="binding site" evidence="2">
    <location>
        <position position="628"/>
    </location>
    <ligand>
        <name>[4Fe-4S] cluster</name>
        <dbReference type="ChEBI" id="CHEBI:49883"/>
        <label>2</label>
    </ligand>
</feature>
<feature type="binding site" evidence="2">
    <location>
        <position position="631"/>
    </location>
    <ligand>
        <name>[4Fe-4S] cluster</name>
        <dbReference type="ChEBI" id="CHEBI:49883"/>
        <label>2</label>
    </ligand>
</feature>
<feature type="binding site" evidence="2">
    <location>
        <position position="635"/>
    </location>
    <ligand>
        <name>[4Fe-4S] cluster</name>
        <dbReference type="ChEBI" id="CHEBI:49883"/>
        <label>1</label>
    </ligand>
</feature>
<name>IORA_PYRAB</name>
<accession>Q9UZ57</accession>
<accession>G8ZHA0</accession>
<reference key="1">
    <citation type="journal article" date="2003" name="Mol. Microbiol.">
        <title>An integrated analysis of the genome of the hyperthermophilic archaeon Pyrococcus abyssi.</title>
        <authorList>
            <person name="Cohen G.N."/>
            <person name="Barbe V."/>
            <person name="Flament D."/>
            <person name="Galperin M."/>
            <person name="Heilig R."/>
            <person name="Lecompte O."/>
            <person name="Poch O."/>
            <person name="Prieur D."/>
            <person name="Querellou J."/>
            <person name="Ripp R."/>
            <person name="Thierry J.-C."/>
            <person name="Van der Oost J."/>
            <person name="Weissenbach J."/>
            <person name="Zivanovic Y."/>
            <person name="Forterre P."/>
        </authorList>
    </citation>
    <scope>NUCLEOTIDE SEQUENCE [LARGE SCALE GENOMIC DNA]</scope>
    <source>
        <strain>GE5 / Orsay</strain>
    </source>
</reference>
<reference key="2">
    <citation type="journal article" date="2012" name="Curr. Microbiol.">
        <title>Re-annotation of two hyperthermophilic archaea Pyrococcus abyssi GE5 and Pyrococcus furiosus DSM 3638.</title>
        <authorList>
            <person name="Gao J."/>
            <person name="Wang J."/>
        </authorList>
    </citation>
    <scope>GENOME REANNOTATION</scope>
    <source>
        <strain>GE5 / Orsay</strain>
    </source>
</reference>
<keyword id="KW-0004">4Fe-4S</keyword>
<keyword id="KW-0249">Electron transport</keyword>
<keyword id="KW-0408">Iron</keyword>
<keyword id="KW-0411">Iron-sulfur</keyword>
<keyword id="KW-0479">Metal-binding</keyword>
<keyword id="KW-0560">Oxidoreductase</keyword>
<keyword id="KW-0677">Repeat</keyword>
<keyword id="KW-0813">Transport</keyword>
<dbReference type="EC" id="1.2.7.8"/>
<dbReference type="EMBL" id="AJ248287">
    <property type="protein sequence ID" value="CAB50202.1"/>
    <property type="molecule type" value="Genomic_DNA"/>
</dbReference>
<dbReference type="EMBL" id="HE613800">
    <property type="protein sequence ID" value="CCE70737.1"/>
    <property type="molecule type" value="Genomic_DNA"/>
</dbReference>
<dbReference type="PIR" id="E75038">
    <property type="entry name" value="E75038"/>
</dbReference>
<dbReference type="RefSeq" id="WP_010868411.1">
    <property type="nucleotide sequence ID" value="NC_000868.1"/>
</dbReference>
<dbReference type="STRING" id="272844.PAB0855"/>
<dbReference type="KEGG" id="pab:PAB0855"/>
<dbReference type="PATRIC" id="fig|272844.11.peg.1380"/>
<dbReference type="eggNOG" id="arCOG01609">
    <property type="taxonomic scope" value="Archaea"/>
</dbReference>
<dbReference type="HOGENOM" id="CLU_017727_0_0_2"/>
<dbReference type="OrthoDB" id="15347at2157"/>
<dbReference type="PhylomeDB" id="Q9UZ57"/>
<dbReference type="Proteomes" id="UP000000810">
    <property type="component" value="Chromosome"/>
</dbReference>
<dbReference type="Proteomes" id="UP000009139">
    <property type="component" value="Chromosome"/>
</dbReference>
<dbReference type="GO" id="GO:0051539">
    <property type="term" value="F:4 iron, 4 sulfur cluster binding"/>
    <property type="evidence" value="ECO:0007669"/>
    <property type="project" value="UniProtKB-KW"/>
</dbReference>
<dbReference type="GO" id="GO:0043805">
    <property type="term" value="F:indolepyruvate ferredoxin oxidoreductase activity"/>
    <property type="evidence" value="ECO:0007669"/>
    <property type="project" value="UniProtKB-EC"/>
</dbReference>
<dbReference type="GO" id="GO:0046872">
    <property type="term" value="F:metal ion binding"/>
    <property type="evidence" value="ECO:0007669"/>
    <property type="project" value="UniProtKB-KW"/>
</dbReference>
<dbReference type="GO" id="GO:0030976">
    <property type="term" value="F:thiamine pyrophosphate binding"/>
    <property type="evidence" value="ECO:0007669"/>
    <property type="project" value="InterPro"/>
</dbReference>
<dbReference type="GO" id="GO:0006082">
    <property type="term" value="P:organic acid metabolic process"/>
    <property type="evidence" value="ECO:0007669"/>
    <property type="project" value="UniProtKB-ARBA"/>
</dbReference>
<dbReference type="GO" id="GO:0044272">
    <property type="term" value="P:sulfur compound biosynthetic process"/>
    <property type="evidence" value="ECO:0007669"/>
    <property type="project" value="UniProtKB-ARBA"/>
</dbReference>
<dbReference type="CDD" id="cd02008">
    <property type="entry name" value="TPP_IOR_alpha"/>
    <property type="match status" value="1"/>
</dbReference>
<dbReference type="CDD" id="cd07034">
    <property type="entry name" value="TPP_PYR_PFOR_IOR-alpha_like"/>
    <property type="match status" value="1"/>
</dbReference>
<dbReference type="FunFam" id="3.30.70.20:FF:000089">
    <property type="entry name" value="Indolepyruvate oxidoreductase subunit IorA"/>
    <property type="match status" value="1"/>
</dbReference>
<dbReference type="FunFam" id="3.40.50.970:FF:000039">
    <property type="entry name" value="Indolepyruvate oxidoreductase subunit IorA"/>
    <property type="match status" value="1"/>
</dbReference>
<dbReference type="Gene3D" id="3.30.70.20">
    <property type="match status" value="1"/>
</dbReference>
<dbReference type="Gene3D" id="3.40.50.970">
    <property type="match status" value="2"/>
</dbReference>
<dbReference type="InterPro" id="IPR017896">
    <property type="entry name" value="4Fe4S_Fe-S-bd"/>
</dbReference>
<dbReference type="InterPro" id="IPR017900">
    <property type="entry name" value="4Fe4S_Fe_S_CS"/>
</dbReference>
<dbReference type="InterPro" id="IPR045025">
    <property type="entry name" value="HACL1-like"/>
</dbReference>
<dbReference type="InterPro" id="IPR017721">
    <property type="entry name" value="IorA"/>
</dbReference>
<dbReference type="InterPro" id="IPR002880">
    <property type="entry name" value="Pyrv_Fd/Flavodoxin_OxRdtase_N"/>
</dbReference>
<dbReference type="InterPro" id="IPR029061">
    <property type="entry name" value="THDP-binding"/>
</dbReference>
<dbReference type="InterPro" id="IPR011766">
    <property type="entry name" value="TPP_enzyme_TPP-bd"/>
</dbReference>
<dbReference type="InterPro" id="IPR009014">
    <property type="entry name" value="Transketo_C/PFOR_II"/>
</dbReference>
<dbReference type="NCBIfam" id="TIGR03336">
    <property type="entry name" value="IOR_alpha"/>
    <property type="match status" value="1"/>
</dbReference>
<dbReference type="PANTHER" id="PTHR43710">
    <property type="entry name" value="2-HYDROXYACYL-COA LYASE"/>
    <property type="match status" value="1"/>
</dbReference>
<dbReference type="PANTHER" id="PTHR43710:SF7">
    <property type="entry name" value="INDOLEPYRUVATE OXIDOREDUCTASE SUBUNIT IORA"/>
    <property type="match status" value="1"/>
</dbReference>
<dbReference type="Pfam" id="PF12838">
    <property type="entry name" value="Fer4_7"/>
    <property type="match status" value="1"/>
</dbReference>
<dbReference type="Pfam" id="PF01855">
    <property type="entry name" value="POR_N"/>
    <property type="match status" value="1"/>
</dbReference>
<dbReference type="Pfam" id="PF02775">
    <property type="entry name" value="TPP_enzyme_C"/>
    <property type="match status" value="1"/>
</dbReference>
<dbReference type="PIRSF" id="PIRSF006439">
    <property type="entry name" value="Indolepyruvate_ferr_oxidored"/>
    <property type="match status" value="1"/>
</dbReference>
<dbReference type="SUPFAM" id="SSF54862">
    <property type="entry name" value="4Fe-4S ferredoxins"/>
    <property type="match status" value="1"/>
</dbReference>
<dbReference type="SUPFAM" id="SSF52518">
    <property type="entry name" value="Thiamin diphosphate-binding fold (THDP-binding)"/>
    <property type="match status" value="2"/>
</dbReference>
<dbReference type="SUPFAM" id="SSF52922">
    <property type="entry name" value="TK C-terminal domain-like"/>
    <property type="match status" value="1"/>
</dbReference>
<dbReference type="PROSITE" id="PS00198">
    <property type="entry name" value="4FE4S_FER_1"/>
    <property type="match status" value="1"/>
</dbReference>
<dbReference type="PROSITE" id="PS51379">
    <property type="entry name" value="4FE4S_FER_2"/>
    <property type="match status" value="2"/>
</dbReference>
<gene>
    <name type="primary">iorA</name>
    <name type="ordered locus">PYRAB12970</name>
    <name type="ORF">PAB0855</name>
</gene>
<evidence type="ECO:0000250" key="1"/>
<evidence type="ECO:0000250" key="2">
    <source>
        <dbReference type="UniProtKB" id="O07835"/>
    </source>
</evidence>
<evidence type="ECO:0000255" key="3">
    <source>
        <dbReference type="PROSITE-ProRule" id="PRU00711"/>
    </source>
</evidence>
<organism>
    <name type="scientific">Pyrococcus abyssi (strain GE5 / Orsay)</name>
    <dbReference type="NCBI Taxonomy" id="272844"/>
    <lineage>
        <taxon>Archaea</taxon>
        <taxon>Methanobacteriati</taxon>
        <taxon>Methanobacteriota</taxon>
        <taxon>Thermococci</taxon>
        <taxon>Thermococcales</taxon>
        <taxon>Thermococcaceae</taxon>
        <taxon>Pyrococcus</taxon>
    </lineage>
</organism>
<proteinExistence type="inferred from homology"/>
<protein>
    <recommendedName>
        <fullName>Indolepyruvate oxidoreductase subunit IorA</fullName>
        <shortName>IOR</shortName>
        <ecNumber>1.2.7.8</ecNumber>
    </recommendedName>
    <alternativeName>
        <fullName>Indolepyruvate ferredoxin oxidoreductase subunit alpha</fullName>
    </alternativeName>
</protein>
<sequence length="648" mass="71355">MVKVTDIVLWDKPGERVLLLGNQAIVRGALEGNIGVYAAYPGTPSSEITDTMAAVASRAGVYMEYSTNEKVAFETALSASWAGLRAMTAMKHVGLNVAMDSFMTVSYMGVNGGLVVVVADDPSMWSSQNEQDTRAIAKFANIPVLEPSSVQEAKDMVKYAFEISEKYGQMVILRTTTRSSHMRGDVVLGELPQEIKEGKRKFGDFKKNPERYVDIPAFQRPKHKWLLETIEKFREEFNNSPFNWIEGPEDAKVGIIAPGLSYAYVKEALAWLGVDNVKVLKLGTPFPVPYGLLEKFFQGLERVLIVEELEPVVEEQVKVWAFDKGINVEIHGKDLVPRVYEMTTRRAVEAIAKFLGLETPINFEEIDEKYKKVQEIVPPRPPSLCPACPHRNTFFALRKAATPRAIYPSDIGCYTLGVLPPLKTVDTTIAMGGSIGVAHGLSIALNGSIAEEQRKTGKGKKIIAATIGDSTFFHTGLPALANAIYNRSNVLIVVLDNLVTAMTGDQPNPGTGETPHGPGKRILIEEVAKAMGADFVAVVDPYDIKETYETFKKALEVEGVSVVVARRACALYRIGQLRRAGKQWPIYQVNEDKCTGCKICINAYGCPAIYWDPEKKKAKVDPLMCWGCGGCAQVCPFDAFEKVREGEL</sequence>
<comment type="function">
    <text evidence="1">Catalyzes the ferredoxin-dependent oxidative decarboxylation of arylpyruvates.</text>
</comment>
<comment type="catalytic activity">
    <reaction>
        <text>indole-3-pyruvate + 2 oxidized [2Fe-2S]-[ferredoxin] + CoA = (indol-3-yl)acetyl-CoA + 2 reduced [2Fe-2S]-[ferredoxin] + CO2 + H(+)</text>
        <dbReference type="Rhea" id="RHEA:12645"/>
        <dbReference type="Rhea" id="RHEA-COMP:10000"/>
        <dbReference type="Rhea" id="RHEA-COMP:10001"/>
        <dbReference type="ChEBI" id="CHEBI:15378"/>
        <dbReference type="ChEBI" id="CHEBI:16526"/>
        <dbReference type="ChEBI" id="CHEBI:17640"/>
        <dbReference type="ChEBI" id="CHEBI:33737"/>
        <dbReference type="ChEBI" id="CHEBI:33738"/>
        <dbReference type="ChEBI" id="CHEBI:57271"/>
        <dbReference type="ChEBI" id="CHEBI:57287"/>
        <dbReference type="EC" id="1.2.7.8"/>
    </reaction>
</comment>
<comment type="cofactor">
    <cofactor evidence="2">
        <name>[4Fe-4S] cluster</name>
        <dbReference type="ChEBI" id="CHEBI:49883"/>
    </cofactor>
    <text evidence="2">Binds 2 [4Fe-4S] clusters. In this family the first cluster has a non-standard and varying [4Fe-4S] binding motif CX(2)CX(2)CX(4-5)CP.</text>
</comment>
<comment type="subunit">
    <text>Heterodimer of the IorA and IorB subunits.</text>
</comment>